<keyword id="KW-0150">Chloroplast</keyword>
<keyword id="KW-0472">Membrane</keyword>
<keyword id="KW-0520">NAD</keyword>
<keyword id="KW-0521">NADP</keyword>
<keyword id="KW-0934">Plastid</keyword>
<keyword id="KW-0618">Plastoquinone</keyword>
<keyword id="KW-0874">Quinone</keyword>
<keyword id="KW-0793">Thylakoid</keyword>
<keyword id="KW-1278">Translocase</keyword>
<keyword id="KW-0812">Transmembrane</keyword>
<keyword id="KW-1133">Transmembrane helix</keyword>
<dbReference type="EC" id="7.1.1.-" evidence="1"/>
<dbReference type="EMBL" id="AP009368">
    <property type="protein sequence ID" value="BAF49995.1"/>
    <property type="molecule type" value="Genomic_DNA"/>
</dbReference>
<dbReference type="RefSeq" id="YP_001123170.1">
    <property type="nucleotide sequence ID" value="NC_009267.1"/>
</dbReference>
<dbReference type="SMR" id="A4QJY7"/>
<dbReference type="GeneID" id="4962406"/>
<dbReference type="GO" id="GO:0009535">
    <property type="term" value="C:chloroplast thylakoid membrane"/>
    <property type="evidence" value="ECO:0007669"/>
    <property type="project" value="UniProtKB-SubCell"/>
</dbReference>
<dbReference type="GO" id="GO:0003954">
    <property type="term" value="F:NADH dehydrogenase activity"/>
    <property type="evidence" value="ECO:0007669"/>
    <property type="project" value="TreeGrafter"/>
</dbReference>
<dbReference type="GO" id="GO:0016655">
    <property type="term" value="F:oxidoreductase activity, acting on NAD(P)H, quinone or similar compound as acceptor"/>
    <property type="evidence" value="ECO:0007669"/>
    <property type="project" value="UniProtKB-UniRule"/>
</dbReference>
<dbReference type="GO" id="GO:0048038">
    <property type="term" value="F:quinone binding"/>
    <property type="evidence" value="ECO:0007669"/>
    <property type="project" value="UniProtKB-KW"/>
</dbReference>
<dbReference type="GO" id="GO:0009060">
    <property type="term" value="P:aerobic respiration"/>
    <property type="evidence" value="ECO:0007669"/>
    <property type="project" value="TreeGrafter"/>
</dbReference>
<dbReference type="GO" id="GO:0019684">
    <property type="term" value="P:photosynthesis, light reaction"/>
    <property type="evidence" value="ECO:0007669"/>
    <property type="project" value="UniProtKB-UniRule"/>
</dbReference>
<dbReference type="HAMAP" id="MF_01350">
    <property type="entry name" value="NDH1_NuoH"/>
    <property type="match status" value="1"/>
</dbReference>
<dbReference type="InterPro" id="IPR001694">
    <property type="entry name" value="NADH_UbQ_OxRdtase_su1/FPO"/>
</dbReference>
<dbReference type="InterPro" id="IPR018086">
    <property type="entry name" value="NADH_UbQ_OxRdtase_su1_CS"/>
</dbReference>
<dbReference type="NCBIfam" id="NF004741">
    <property type="entry name" value="PRK06076.1-2"/>
    <property type="match status" value="1"/>
</dbReference>
<dbReference type="PANTHER" id="PTHR11432">
    <property type="entry name" value="NADH DEHYDROGENASE SUBUNIT 1"/>
    <property type="match status" value="1"/>
</dbReference>
<dbReference type="PANTHER" id="PTHR11432:SF3">
    <property type="entry name" value="NADH-UBIQUINONE OXIDOREDUCTASE CHAIN 1"/>
    <property type="match status" value="1"/>
</dbReference>
<dbReference type="Pfam" id="PF00146">
    <property type="entry name" value="NADHdh"/>
    <property type="match status" value="1"/>
</dbReference>
<dbReference type="PROSITE" id="PS00667">
    <property type="entry name" value="COMPLEX1_ND1_1"/>
    <property type="match status" value="1"/>
</dbReference>
<dbReference type="PROSITE" id="PS00668">
    <property type="entry name" value="COMPLEX1_ND1_2"/>
    <property type="match status" value="1"/>
</dbReference>
<sequence length="360" mass="40137">MIIYATVVQTINSFVRLESLKEVYGLIWIFVPIFSLVLGIITGVLVIVWLEREISAGIQQRIGPEYAGPLGILQALADGTKLLFKENLRPSRGNTPLFSIGPSIAVISILLSYSVIPFSNHLVLADLNIGIFLWIAISSIAPIGLLMSGYGSNNKYSFLGGLRAAAQSISYEIPLTLCVLSISLLSNSLSTVDIVEAQSKYGFWGWNLWRQPIGFIIFLISSLAECERLPFDLPEAEEELIAGYQTEYSGIKFGLFYVASYLNLLISSLFVTVLYLGGWNISIPYISILELFQRDQIFGTTICIFITLAKTYLFLFISIATRWTLPRLRMDQLLNLGWKFLLPISLGNLLLTTSFQLFSL</sequence>
<accession>A4QJY7</accession>
<evidence type="ECO:0000255" key="1">
    <source>
        <dbReference type="HAMAP-Rule" id="MF_01350"/>
    </source>
</evidence>
<name>NU1C_OLIPU</name>
<feature type="chain" id="PRO_0000298877" description="NAD(P)H-quinone oxidoreductase subunit 1, chloroplastic">
    <location>
        <begin position="1"/>
        <end position="360"/>
    </location>
</feature>
<feature type="transmembrane region" description="Helical" evidence="1">
    <location>
        <begin position="27"/>
        <end position="47"/>
    </location>
</feature>
<feature type="transmembrane region" description="Helical" evidence="1">
    <location>
        <begin position="98"/>
        <end position="118"/>
    </location>
</feature>
<feature type="transmembrane region" description="Helical" evidence="1">
    <location>
        <begin position="129"/>
        <end position="149"/>
    </location>
</feature>
<feature type="transmembrane region" description="Helical" evidence="1">
    <location>
        <begin position="165"/>
        <end position="185"/>
    </location>
</feature>
<feature type="transmembrane region" description="Helical" evidence="1">
    <location>
        <begin position="203"/>
        <end position="223"/>
    </location>
</feature>
<feature type="transmembrane region" description="Helical" evidence="1">
    <location>
        <begin position="248"/>
        <end position="268"/>
    </location>
</feature>
<feature type="transmembrane region" description="Helical" evidence="1">
    <location>
        <begin position="269"/>
        <end position="289"/>
    </location>
</feature>
<feature type="transmembrane region" description="Helical" evidence="1">
    <location>
        <begin position="297"/>
        <end position="317"/>
    </location>
</feature>
<feature type="transmembrane region" description="Helical" evidence="1">
    <location>
        <begin position="340"/>
        <end position="360"/>
    </location>
</feature>
<geneLocation type="chloroplast"/>
<organism>
    <name type="scientific">Olimarabidopsis pumila</name>
    <name type="common">Dwarf rocket</name>
    <name type="synonym">Arabidopsis griffithiana</name>
    <dbReference type="NCBI Taxonomy" id="74718"/>
    <lineage>
        <taxon>Eukaryota</taxon>
        <taxon>Viridiplantae</taxon>
        <taxon>Streptophyta</taxon>
        <taxon>Embryophyta</taxon>
        <taxon>Tracheophyta</taxon>
        <taxon>Spermatophyta</taxon>
        <taxon>Magnoliopsida</taxon>
        <taxon>eudicotyledons</taxon>
        <taxon>Gunneridae</taxon>
        <taxon>Pentapetalae</taxon>
        <taxon>rosids</taxon>
        <taxon>malvids</taxon>
        <taxon>Brassicales</taxon>
        <taxon>Brassicaceae</taxon>
        <taxon>Alyssopsideae</taxon>
        <taxon>Olimarabidopsis</taxon>
    </lineage>
</organism>
<proteinExistence type="inferred from homology"/>
<gene>
    <name evidence="1" type="primary">ndhA</name>
</gene>
<protein>
    <recommendedName>
        <fullName evidence="1">NAD(P)H-quinone oxidoreductase subunit 1, chloroplastic</fullName>
        <ecNumber evidence="1">7.1.1.-</ecNumber>
    </recommendedName>
    <alternativeName>
        <fullName evidence="1">NAD(P)H dehydrogenase subunit 1</fullName>
        <shortName evidence="1">NDH subunit 1</shortName>
    </alternativeName>
    <alternativeName>
        <fullName evidence="1">NADH-plastoquinone oxidoreductase subunit 1</fullName>
    </alternativeName>
</protein>
<comment type="function">
    <text evidence="1">NDH shuttles electrons from NAD(P)H:plastoquinone, via FMN and iron-sulfur (Fe-S) centers, to quinones in the photosynthetic chain and possibly in a chloroplast respiratory chain. The immediate electron acceptor for the enzyme in this species is believed to be plastoquinone. Couples the redox reaction to proton translocation, and thus conserves the redox energy in a proton gradient.</text>
</comment>
<comment type="catalytic activity">
    <reaction evidence="1">
        <text>a plastoquinone + NADH + (n+1) H(+)(in) = a plastoquinol + NAD(+) + n H(+)(out)</text>
        <dbReference type="Rhea" id="RHEA:42608"/>
        <dbReference type="Rhea" id="RHEA-COMP:9561"/>
        <dbReference type="Rhea" id="RHEA-COMP:9562"/>
        <dbReference type="ChEBI" id="CHEBI:15378"/>
        <dbReference type="ChEBI" id="CHEBI:17757"/>
        <dbReference type="ChEBI" id="CHEBI:57540"/>
        <dbReference type="ChEBI" id="CHEBI:57945"/>
        <dbReference type="ChEBI" id="CHEBI:62192"/>
    </reaction>
</comment>
<comment type="catalytic activity">
    <reaction evidence="1">
        <text>a plastoquinone + NADPH + (n+1) H(+)(in) = a plastoquinol + NADP(+) + n H(+)(out)</text>
        <dbReference type="Rhea" id="RHEA:42612"/>
        <dbReference type="Rhea" id="RHEA-COMP:9561"/>
        <dbReference type="Rhea" id="RHEA-COMP:9562"/>
        <dbReference type="ChEBI" id="CHEBI:15378"/>
        <dbReference type="ChEBI" id="CHEBI:17757"/>
        <dbReference type="ChEBI" id="CHEBI:57783"/>
        <dbReference type="ChEBI" id="CHEBI:58349"/>
        <dbReference type="ChEBI" id="CHEBI:62192"/>
    </reaction>
</comment>
<comment type="subunit">
    <text evidence="1">NDH is composed of at least 16 different subunits, 5 of which are encoded in the nucleus.</text>
</comment>
<comment type="subcellular location">
    <subcellularLocation>
        <location evidence="1">Plastid</location>
        <location evidence="1">Chloroplast thylakoid membrane</location>
        <topology evidence="1">Multi-pass membrane protein</topology>
    </subcellularLocation>
</comment>
<comment type="similarity">
    <text evidence="1">Belongs to the complex I subunit 1 family.</text>
</comment>
<reference key="1">
    <citation type="submission" date="2007-03" db="EMBL/GenBank/DDBJ databases">
        <title>Sequence analysis of Arabidopsis pumila JS2 chloroplast DNA.</title>
        <authorList>
            <person name="Hosouchi T."/>
            <person name="Tsuruoka H."/>
            <person name="Kotani H."/>
        </authorList>
    </citation>
    <scope>NUCLEOTIDE SEQUENCE [LARGE SCALE GENOMIC DNA]</scope>
    <source>
        <strain>JS2</strain>
    </source>
</reference>